<evidence type="ECO:0000255" key="1"/>
<evidence type="ECO:0000269" key="2">
    <source>
    </source>
</evidence>
<evidence type="ECO:0000305" key="3"/>
<organism>
    <name type="scientific">Bacillus subtilis (strain 168)</name>
    <dbReference type="NCBI Taxonomy" id="224308"/>
    <lineage>
        <taxon>Bacteria</taxon>
        <taxon>Bacillati</taxon>
        <taxon>Bacillota</taxon>
        <taxon>Bacilli</taxon>
        <taxon>Bacillales</taxon>
        <taxon>Bacillaceae</taxon>
        <taxon>Bacillus</taxon>
    </lineage>
</organism>
<keyword id="KW-1003">Cell membrane</keyword>
<keyword id="KW-0270">Exopolysaccharide synthesis</keyword>
<keyword id="KW-0472">Membrane</keyword>
<keyword id="KW-1185">Reference proteome</keyword>
<keyword id="KW-0812">Transmembrane</keyword>
<keyword id="KW-1133">Transmembrane helix</keyword>
<comment type="function">
    <text evidence="2">Involved in biofilm formation.</text>
</comment>
<comment type="subcellular location">
    <subcellularLocation>
        <location evidence="3">Cell membrane</location>
        <topology evidence="3">Multi-pass membrane protein</topology>
    </subcellularLocation>
</comment>
<comment type="similarity">
    <text evidence="3">Belongs to the polysaccharide synthase family.</text>
</comment>
<name>EPSC_BACSU</name>
<dbReference type="EMBL" id="Z71928">
    <property type="protein sequence ID" value="CAA96491.1"/>
    <property type="molecule type" value="Genomic_DNA"/>
</dbReference>
<dbReference type="EMBL" id="Z94043">
    <property type="protein sequence ID" value="CAB08025.1"/>
    <property type="molecule type" value="Genomic_DNA"/>
</dbReference>
<dbReference type="EMBL" id="AL009126">
    <property type="protein sequence ID" value="CAB15440.1"/>
    <property type="molecule type" value="Genomic_DNA"/>
</dbReference>
<dbReference type="PIR" id="B70036">
    <property type="entry name" value="B70036"/>
</dbReference>
<dbReference type="RefSeq" id="NP_391315.1">
    <property type="nucleotide sequence ID" value="NC_000964.3"/>
</dbReference>
<dbReference type="RefSeq" id="WP_003244548.1">
    <property type="nucleotide sequence ID" value="NC_000964.3"/>
</dbReference>
<dbReference type="SMR" id="P71052"/>
<dbReference type="FunCoup" id="P71052">
    <property type="interactions" value="86"/>
</dbReference>
<dbReference type="STRING" id="224308.BSU34350"/>
<dbReference type="PaxDb" id="224308-BSU34350"/>
<dbReference type="DNASU" id="938571"/>
<dbReference type="EnsemblBacteria" id="CAB15440">
    <property type="protein sequence ID" value="CAB15440"/>
    <property type="gene ID" value="BSU_34350"/>
</dbReference>
<dbReference type="GeneID" id="938571"/>
<dbReference type="KEGG" id="bsu:BSU34350"/>
<dbReference type="PATRIC" id="fig|224308.179.peg.3721"/>
<dbReference type="eggNOG" id="COG1086">
    <property type="taxonomic scope" value="Bacteria"/>
</dbReference>
<dbReference type="InParanoid" id="P71052"/>
<dbReference type="OrthoDB" id="9803111at2"/>
<dbReference type="PhylomeDB" id="P71052"/>
<dbReference type="BioCyc" id="BSUB:BSU34350-MONOMER"/>
<dbReference type="STRENDA-DB" id="PW722Q">
    <property type="experiment" value="reverse phase HPLC-EpsC115"/>
</dbReference>
<dbReference type="STRENDA-DB" id="RX2QBL">
    <property type="experiment" value="reverse phase HPLC-EpsC89"/>
</dbReference>
<dbReference type="Proteomes" id="UP000001570">
    <property type="component" value="Chromosome"/>
</dbReference>
<dbReference type="GO" id="GO:0005886">
    <property type="term" value="C:plasma membrane"/>
    <property type="evidence" value="ECO:0007669"/>
    <property type="project" value="UniProtKB-SubCell"/>
</dbReference>
<dbReference type="GO" id="GO:0000271">
    <property type="term" value="P:polysaccharide biosynthetic process"/>
    <property type="evidence" value="ECO:0007669"/>
    <property type="project" value="UniProtKB-KW"/>
</dbReference>
<dbReference type="GO" id="GO:1900192">
    <property type="term" value="P:positive regulation of single-species biofilm formation"/>
    <property type="evidence" value="ECO:0000315"/>
    <property type="project" value="CACAO"/>
</dbReference>
<dbReference type="CDD" id="cd05237">
    <property type="entry name" value="UDP_invert_4-6DH_SDR_e"/>
    <property type="match status" value="1"/>
</dbReference>
<dbReference type="FunFam" id="3.40.50.720:FF:000568">
    <property type="entry name" value="Polysaccharide biosynthesis protein"/>
    <property type="match status" value="1"/>
</dbReference>
<dbReference type="Gene3D" id="3.40.50.720">
    <property type="entry name" value="NAD(P)-binding Rossmann-like Domain"/>
    <property type="match status" value="2"/>
</dbReference>
<dbReference type="InterPro" id="IPR036291">
    <property type="entry name" value="NAD(P)-bd_dom_sf"/>
</dbReference>
<dbReference type="InterPro" id="IPR003869">
    <property type="entry name" value="Polysac_CapD-like"/>
</dbReference>
<dbReference type="InterPro" id="IPR051203">
    <property type="entry name" value="Polysaccharide_Synthase-Rel"/>
</dbReference>
<dbReference type="InterPro" id="IPR029063">
    <property type="entry name" value="SAM-dependent_MTases_sf"/>
</dbReference>
<dbReference type="PANTHER" id="PTHR43318:SF1">
    <property type="entry name" value="POLYSACCHARIDE BIOSYNTHESIS PROTEIN EPSC-RELATED"/>
    <property type="match status" value="1"/>
</dbReference>
<dbReference type="PANTHER" id="PTHR43318">
    <property type="entry name" value="UDP-N-ACETYLGLUCOSAMINE 4,6-DEHYDRATASE"/>
    <property type="match status" value="1"/>
</dbReference>
<dbReference type="Pfam" id="PF13727">
    <property type="entry name" value="CoA_binding_3"/>
    <property type="match status" value="1"/>
</dbReference>
<dbReference type="Pfam" id="PF02719">
    <property type="entry name" value="Polysacc_synt_2"/>
    <property type="match status" value="1"/>
</dbReference>
<dbReference type="SUPFAM" id="SSF51735">
    <property type="entry name" value="NAD(P)-binding Rossmann-fold domains"/>
    <property type="match status" value="1"/>
</dbReference>
<dbReference type="SUPFAM" id="SSF53335">
    <property type="entry name" value="S-adenosyl-L-methionine-dependent methyltransferases"/>
    <property type="match status" value="1"/>
</dbReference>
<sequence>MIIALDTYLVLNSVIAGYQFLKDSYQFYDSGALLLTAVSLLLSYHVCAFLFNQYKQVWTYTGLGELIVLLKGITLSAAVTGVIQYAVYHTMFFRLLTACWVLQLLSIGGTRILSRVLNESIRKKRCASSRALIIGAGSGGTLMVRQLLSKDEPDIIPVAFIDDDQTKHKLEIMGLPVIGGKESIMPAVQKLKINYIIIAIPSLRTHELQVLYKECVRTGVSIKIMPHFDEMLLGTRTAGQIRDVKAEDLLGRKPVTLDTSEISNRIKGKTVLVTGAGGSIGSEICRQISAFQPKEIILLGHGENSIHSIYTELNGRFGKHIVFHTEIADVQDRDKMFTLMKKYEPHVVYHAAAHKHVPLMEHNPEEAVKNNIIGTKNVAEAADMSGTETFVLISSDKAVNPANVMGATKRFAEMIIMNLGKVSRTKFVAVRFGNVLGSRGSVIPIFKKQIEKGGPVTVTHPAMTRYFMTIPEASRLVIQAGALAKGRQIFVLDMGEPVKIVDLAKNLIHLSGYTTEQVPIEFTGIRPGEKMYEELLNKNEVHAEQIFPKIHIGKAVDGDWPVLMRFIEDFHELPEADLRARLFAAINTSEEMTAASVH</sequence>
<gene>
    <name type="primary">epsC</name>
    <name type="synonym">yveM</name>
    <name type="ordered locus">BSU34350</name>
</gene>
<accession>P71052</accession>
<accession>O08171</accession>
<accession>Q795I1</accession>
<reference key="1">
    <citation type="journal article" date="1996" name="Microbiology">
        <title>Integrated mapping and sequencing of a 115 kb DNA fragment from Bacillus subtilis: sequence analysis of a 21 kb segment containing the sigL locus.</title>
        <authorList>
            <person name="Fabret C."/>
            <person name="Quentin Y."/>
            <person name="Chapal N."/>
            <person name="Guiseppi A."/>
            <person name="Haiech J."/>
            <person name="Denizot F."/>
        </authorList>
    </citation>
    <scope>NUCLEOTIDE SEQUENCE [GENOMIC DNA]</scope>
    <source>
        <strain>168trp</strain>
    </source>
</reference>
<reference key="2">
    <citation type="submission" date="1997-04" db="EMBL/GenBank/DDBJ databases">
        <authorList>
            <person name="Denizot F."/>
        </authorList>
    </citation>
    <scope>NUCLEOTIDE SEQUENCE [GENOMIC DNA]</scope>
    <source>
        <strain>168</strain>
    </source>
</reference>
<reference key="3">
    <citation type="journal article" date="1997" name="Nature">
        <title>The complete genome sequence of the Gram-positive bacterium Bacillus subtilis.</title>
        <authorList>
            <person name="Kunst F."/>
            <person name="Ogasawara N."/>
            <person name="Moszer I."/>
            <person name="Albertini A.M."/>
            <person name="Alloni G."/>
            <person name="Azevedo V."/>
            <person name="Bertero M.G."/>
            <person name="Bessieres P."/>
            <person name="Bolotin A."/>
            <person name="Borchert S."/>
            <person name="Borriss R."/>
            <person name="Boursier L."/>
            <person name="Brans A."/>
            <person name="Braun M."/>
            <person name="Brignell S.C."/>
            <person name="Bron S."/>
            <person name="Brouillet S."/>
            <person name="Bruschi C.V."/>
            <person name="Caldwell B."/>
            <person name="Capuano V."/>
            <person name="Carter N.M."/>
            <person name="Choi S.-K."/>
            <person name="Codani J.-J."/>
            <person name="Connerton I.F."/>
            <person name="Cummings N.J."/>
            <person name="Daniel R.A."/>
            <person name="Denizot F."/>
            <person name="Devine K.M."/>
            <person name="Duesterhoeft A."/>
            <person name="Ehrlich S.D."/>
            <person name="Emmerson P.T."/>
            <person name="Entian K.-D."/>
            <person name="Errington J."/>
            <person name="Fabret C."/>
            <person name="Ferrari E."/>
            <person name="Foulger D."/>
            <person name="Fritz C."/>
            <person name="Fujita M."/>
            <person name="Fujita Y."/>
            <person name="Fuma S."/>
            <person name="Galizzi A."/>
            <person name="Galleron N."/>
            <person name="Ghim S.-Y."/>
            <person name="Glaser P."/>
            <person name="Goffeau A."/>
            <person name="Golightly E.J."/>
            <person name="Grandi G."/>
            <person name="Guiseppi G."/>
            <person name="Guy B.J."/>
            <person name="Haga K."/>
            <person name="Haiech J."/>
            <person name="Harwood C.R."/>
            <person name="Henaut A."/>
            <person name="Hilbert H."/>
            <person name="Holsappel S."/>
            <person name="Hosono S."/>
            <person name="Hullo M.-F."/>
            <person name="Itaya M."/>
            <person name="Jones L.-M."/>
            <person name="Joris B."/>
            <person name="Karamata D."/>
            <person name="Kasahara Y."/>
            <person name="Klaerr-Blanchard M."/>
            <person name="Klein C."/>
            <person name="Kobayashi Y."/>
            <person name="Koetter P."/>
            <person name="Koningstein G."/>
            <person name="Krogh S."/>
            <person name="Kumano M."/>
            <person name="Kurita K."/>
            <person name="Lapidus A."/>
            <person name="Lardinois S."/>
            <person name="Lauber J."/>
            <person name="Lazarevic V."/>
            <person name="Lee S.-M."/>
            <person name="Levine A."/>
            <person name="Liu H."/>
            <person name="Masuda S."/>
            <person name="Mauel C."/>
            <person name="Medigue C."/>
            <person name="Medina N."/>
            <person name="Mellado R.P."/>
            <person name="Mizuno M."/>
            <person name="Moestl D."/>
            <person name="Nakai S."/>
            <person name="Noback M."/>
            <person name="Noone D."/>
            <person name="O'Reilly M."/>
            <person name="Ogawa K."/>
            <person name="Ogiwara A."/>
            <person name="Oudega B."/>
            <person name="Park S.-H."/>
            <person name="Parro V."/>
            <person name="Pohl T.M."/>
            <person name="Portetelle D."/>
            <person name="Porwollik S."/>
            <person name="Prescott A.M."/>
            <person name="Presecan E."/>
            <person name="Pujic P."/>
            <person name="Purnelle B."/>
            <person name="Rapoport G."/>
            <person name="Rey M."/>
            <person name="Reynolds S."/>
            <person name="Rieger M."/>
            <person name="Rivolta C."/>
            <person name="Rocha E."/>
            <person name="Roche B."/>
            <person name="Rose M."/>
            <person name="Sadaie Y."/>
            <person name="Sato T."/>
            <person name="Scanlan E."/>
            <person name="Schleich S."/>
            <person name="Schroeter R."/>
            <person name="Scoffone F."/>
            <person name="Sekiguchi J."/>
            <person name="Sekowska A."/>
            <person name="Seror S.J."/>
            <person name="Serror P."/>
            <person name="Shin B.-S."/>
            <person name="Soldo B."/>
            <person name="Sorokin A."/>
            <person name="Tacconi E."/>
            <person name="Takagi T."/>
            <person name="Takahashi H."/>
            <person name="Takemaru K."/>
            <person name="Takeuchi M."/>
            <person name="Tamakoshi A."/>
            <person name="Tanaka T."/>
            <person name="Terpstra P."/>
            <person name="Tognoni A."/>
            <person name="Tosato V."/>
            <person name="Uchiyama S."/>
            <person name="Vandenbol M."/>
            <person name="Vannier F."/>
            <person name="Vassarotti A."/>
            <person name="Viari A."/>
            <person name="Wambutt R."/>
            <person name="Wedler E."/>
            <person name="Wedler H."/>
            <person name="Weitzenegger T."/>
            <person name="Winters P."/>
            <person name="Wipat A."/>
            <person name="Yamamoto H."/>
            <person name="Yamane K."/>
            <person name="Yasumoto K."/>
            <person name="Yata K."/>
            <person name="Yoshida K."/>
            <person name="Yoshikawa H.-F."/>
            <person name="Zumstein E."/>
            <person name="Yoshikawa H."/>
            <person name="Danchin A."/>
        </authorList>
    </citation>
    <scope>NUCLEOTIDE SEQUENCE [LARGE SCALE GENOMIC DNA]</scope>
    <source>
        <strain>168</strain>
    </source>
</reference>
<reference key="4">
    <citation type="journal article" date="2004" name="J. Bacteriol.">
        <title>Genes involved in formation of structured multicellular communities by Bacillus subtilis.</title>
        <authorList>
            <person name="Branda S.S."/>
            <person name="Gonzalez-Pastor J.E."/>
            <person name="Dervyn E."/>
            <person name="Ehrlich S.D."/>
            <person name="Losick R."/>
            <person name="Kolter R."/>
        </authorList>
    </citation>
    <scope>FUNCTION</scope>
</reference>
<reference key="5">
    <citation type="journal article" date="2005" name="Mol. Microbiol.">
        <title>A master regulator for biofilm formation by Bacillus subtilis.</title>
        <authorList>
            <person name="Kearns D.B."/>
            <person name="Chu F."/>
            <person name="Branda S.S."/>
            <person name="Kolter R."/>
            <person name="Losick R."/>
        </authorList>
    </citation>
    <scope>NOMENCLATURE</scope>
</reference>
<proteinExistence type="inferred from homology"/>
<feature type="chain" id="PRO_0000360639" description="Probable polysaccharide biosynthesis protein EpsC">
    <location>
        <begin position="1"/>
        <end position="598"/>
    </location>
</feature>
<feature type="transmembrane region" description="Helical" evidence="1">
    <location>
        <begin position="1"/>
        <end position="21"/>
    </location>
</feature>
<feature type="transmembrane region" description="Helical" evidence="1">
    <location>
        <begin position="31"/>
        <end position="51"/>
    </location>
</feature>
<feature type="transmembrane region" description="Helical" evidence="1">
    <location>
        <begin position="63"/>
        <end position="83"/>
    </location>
</feature>
<feature type="transmembrane region" description="Helical" evidence="1">
    <location>
        <begin position="87"/>
        <end position="107"/>
    </location>
</feature>
<protein>
    <recommendedName>
        <fullName>Probable polysaccharide biosynthesis protein EpsC</fullName>
    </recommendedName>
</protein>